<name>GCH1_ONCMY</name>
<evidence type="ECO:0000250" key="1">
    <source>
        <dbReference type="UniProtKB" id="P30793"/>
    </source>
</evidence>
<evidence type="ECO:0000256" key="2">
    <source>
        <dbReference type="SAM" id="MobiDB-lite"/>
    </source>
</evidence>
<evidence type="ECO:0000305" key="3"/>
<reference key="1">
    <citation type="journal article" date="1995" name="Biochem. Biophys. Res. Commun.">
        <title>Homology cloning of GTP-cyclohydrolase I from various unrelated eukaryotes by reverse-transcription polymerase chain reaction using a general set of degenerate primers.</title>
        <authorList>
            <person name="Maier J."/>
            <person name="Witter K."/>
            <person name="Guetlich M."/>
            <person name="Ziegler I."/>
            <person name="Werner T."/>
            <person name="Ninnemann H."/>
        </authorList>
    </citation>
    <scope>NUCLEOTIDE SEQUENCE [MRNA]</scope>
</reference>
<gene>
    <name type="primary">gch1</name>
</gene>
<organism>
    <name type="scientific">Oncorhynchus mykiss</name>
    <name type="common">Rainbow trout</name>
    <name type="synonym">Salmo gairdneri</name>
    <dbReference type="NCBI Taxonomy" id="8022"/>
    <lineage>
        <taxon>Eukaryota</taxon>
        <taxon>Metazoa</taxon>
        <taxon>Chordata</taxon>
        <taxon>Craniata</taxon>
        <taxon>Vertebrata</taxon>
        <taxon>Euteleostomi</taxon>
        <taxon>Actinopterygii</taxon>
        <taxon>Neopterygii</taxon>
        <taxon>Teleostei</taxon>
        <taxon>Protacanthopterygii</taxon>
        <taxon>Salmoniformes</taxon>
        <taxon>Salmonidae</taxon>
        <taxon>Salmoninae</taxon>
        <taxon>Oncorhynchus</taxon>
    </lineage>
</organism>
<accession>P51596</accession>
<proteinExistence type="evidence at transcript level"/>
<dbReference type="EC" id="3.5.4.16" evidence="1"/>
<dbReference type="EMBL" id="Z49707">
    <property type="protein sequence ID" value="CAA89809.1"/>
    <property type="molecule type" value="mRNA"/>
</dbReference>
<dbReference type="SMR" id="P51596"/>
<dbReference type="UniPathway" id="UPA00848">
    <property type="reaction ID" value="UER00151"/>
</dbReference>
<dbReference type="Proteomes" id="UP000694395">
    <property type="component" value="Unplaced"/>
</dbReference>
<dbReference type="GO" id="GO:0005737">
    <property type="term" value="C:cytoplasm"/>
    <property type="evidence" value="ECO:0007669"/>
    <property type="project" value="UniProtKB-SubCell"/>
</dbReference>
<dbReference type="GO" id="GO:0005634">
    <property type="term" value="C:nucleus"/>
    <property type="evidence" value="ECO:0007669"/>
    <property type="project" value="UniProtKB-SubCell"/>
</dbReference>
<dbReference type="GO" id="GO:0005525">
    <property type="term" value="F:GTP binding"/>
    <property type="evidence" value="ECO:0007669"/>
    <property type="project" value="UniProtKB-KW"/>
</dbReference>
<dbReference type="GO" id="GO:0003934">
    <property type="term" value="F:GTP cyclohydrolase I activity"/>
    <property type="evidence" value="ECO:0007669"/>
    <property type="project" value="UniProtKB-EC"/>
</dbReference>
<dbReference type="GO" id="GO:0008270">
    <property type="term" value="F:zinc ion binding"/>
    <property type="evidence" value="ECO:0007669"/>
    <property type="project" value="TreeGrafter"/>
</dbReference>
<dbReference type="GO" id="GO:0006729">
    <property type="term" value="P:tetrahydrobiopterin biosynthetic process"/>
    <property type="evidence" value="ECO:0007669"/>
    <property type="project" value="UniProtKB-KW"/>
</dbReference>
<dbReference type="GO" id="GO:0046654">
    <property type="term" value="P:tetrahydrofolate biosynthetic process"/>
    <property type="evidence" value="ECO:0007669"/>
    <property type="project" value="InterPro"/>
</dbReference>
<dbReference type="CDD" id="cd00642">
    <property type="entry name" value="GTP_cyclohydro1"/>
    <property type="match status" value="1"/>
</dbReference>
<dbReference type="FunFam" id="1.10.286.10:FF:000003">
    <property type="entry name" value="GTP cyclohydrolase 1"/>
    <property type="match status" value="1"/>
</dbReference>
<dbReference type="FunFam" id="3.30.1130.10:FF:000012">
    <property type="entry name" value="GTP cyclohydrolase 1"/>
    <property type="match status" value="1"/>
</dbReference>
<dbReference type="Gene3D" id="1.10.286.10">
    <property type="match status" value="1"/>
</dbReference>
<dbReference type="Gene3D" id="3.30.1130.10">
    <property type="match status" value="1"/>
</dbReference>
<dbReference type="InterPro" id="IPR043133">
    <property type="entry name" value="GTP-CH-I_C/QueF"/>
</dbReference>
<dbReference type="InterPro" id="IPR043134">
    <property type="entry name" value="GTP-CH-I_N"/>
</dbReference>
<dbReference type="InterPro" id="IPR001474">
    <property type="entry name" value="GTP_CycHdrlase_I"/>
</dbReference>
<dbReference type="InterPro" id="IPR018234">
    <property type="entry name" value="GTP_CycHdrlase_I_CS"/>
</dbReference>
<dbReference type="InterPro" id="IPR020602">
    <property type="entry name" value="GTP_CycHdrlase_I_dom"/>
</dbReference>
<dbReference type="NCBIfam" id="TIGR00063">
    <property type="entry name" value="folE"/>
    <property type="match status" value="1"/>
</dbReference>
<dbReference type="NCBIfam" id="NF006825">
    <property type="entry name" value="PRK09347.1-2"/>
    <property type="match status" value="1"/>
</dbReference>
<dbReference type="NCBIfam" id="NF006826">
    <property type="entry name" value="PRK09347.1-3"/>
    <property type="match status" value="1"/>
</dbReference>
<dbReference type="PANTHER" id="PTHR11109:SF11">
    <property type="entry name" value="GTP CYCLOHYDROLASE 1"/>
    <property type="match status" value="1"/>
</dbReference>
<dbReference type="PANTHER" id="PTHR11109">
    <property type="entry name" value="GTP CYCLOHYDROLASE I"/>
    <property type="match status" value="1"/>
</dbReference>
<dbReference type="Pfam" id="PF01227">
    <property type="entry name" value="GTP_cyclohydroI"/>
    <property type="match status" value="1"/>
</dbReference>
<dbReference type="SUPFAM" id="SSF55620">
    <property type="entry name" value="Tetrahydrobiopterin biosynthesis enzymes-like"/>
    <property type="match status" value="1"/>
</dbReference>
<dbReference type="PROSITE" id="PS00859">
    <property type="entry name" value="GTP_CYCLOHYDROL_1_1"/>
    <property type="match status" value="1"/>
</dbReference>
<dbReference type="PROSITE" id="PS00860">
    <property type="entry name" value="GTP_CYCLOHYDROL_1_2"/>
    <property type="match status" value="1"/>
</dbReference>
<comment type="function">
    <text evidence="1">May positively regulate nitric oxide synthesis in endothelial cells. May be involved in dopamine synthesis. May modify pain sensitivity and persistence.</text>
</comment>
<comment type="catalytic activity">
    <reaction evidence="1">
        <text>GTP + H2O = 7,8-dihydroneopterin 3'-triphosphate + formate + H(+)</text>
        <dbReference type="Rhea" id="RHEA:17473"/>
        <dbReference type="ChEBI" id="CHEBI:15377"/>
        <dbReference type="ChEBI" id="CHEBI:15378"/>
        <dbReference type="ChEBI" id="CHEBI:15740"/>
        <dbReference type="ChEBI" id="CHEBI:37565"/>
        <dbReference type="ChEBI" id="CHEBI:58462"/>
        <dbReference type="EC" id="3.5.4.16"/>
    </reaction>
</comment>
<comment type="activity regulation">
    <text evidence="1">GTP shows a positive allosteric effect, and tetrahydrobiopterin inhibits the enzyme activity. Zinc is required for catalytic activity. Inhibited by Mg(2+).</text>
</comment>
<comment type="pathway">
    <text evidence="1">Cofactor biosynthesis; 7,8-dihydroneopterin triphosphate biosynthesis; 7,8-dihydroneopterin triphosphate from GTP: step 1/1.</text>
</comment>
<comment type="subunit">
    <text evidence="1">Toroid-shaped homodecamer, composed of two pentamers of five dimers.</text>
</comment>
<comment type="subcellular location">
    <subcellularLocation>
        <location evidence="1">Cytoplasm</location>
    </subcellularLocation>
    <subcellularLocation>
        <location evidence="1">Nucleus</location>
    </subcellularLocation>
</comment>
<comment type="similarity">
    <text evidence="3">Belongs to the GTP cyclohydrolase I family.</text>
</comment>
<sequence>MERSKQSHDNQADSRPTTNESSLNGHFDGLVKKTPGMWDVKGRGTAGESSSHTGSSVVENWKHERTRSIEDNEMSLPSLAAAYTTIIRGLGKDPQRQGLLKTPWRAATAMQFFTKGYQEKIIDVLNDAILDEDHDEMVIVKDIDMFSMCEHHLVPIFGRVHIGYLPNKRVLGLSKLARIVEIYSRRLQVQERLTKQIAVAITEALQPAGVGVVIEATHMCMVMRG</sequence>
<feature type="chain" id="PRO_0000119479" description="GTP cyclohydrolase 1">
    <location>
        <begin position="1" status="less than"/>
        <end position="225" status="greater than"/>
    </location>
</feature>
<feature type="region of interest" description="Disordered" evidence="2">
    <location>
        <begin position="1"/>
        <end position="59"/>
    </location>
</feature>
<feature type="compositionally biased region" description="Basic and acidic residues" evidence="2">
    <location>
        <begin position="1"/>
        <end position="12"/>
    </location>
</feature>
<feature type="compositionally biased region" description="Polar residues" evidence="2">
    <location>
        <begin position="13"/>
        <end position="24"/>
    </location>
</feature>
<feature type="compositionally biased region" description="Polar residues" evidence="2">
    <location>
        <begin position="47"/>
        <end position="58"/>
    </location>
</feature>
<feature type="binding site" evidence="1">
    <location>
        <position position="149"/>
    </location>
    <ligand>
        <name>Zn(2+)</name>
        <dbReference type="ChEBI" id="CHEBI:29105"/>
    </ligand>
</feature>
<feature type="binding site" evidence="1">
    <location>
        <position position="152"/>
    </location>
    <ligand>
        <name>Zn(2+)</name>
        <dbReference type="ChEBI" id="CHEBI:29105"/>
    </ligand>
</feature>
<feature type="binding site" evidence="1">
    <location>
        <position position="220"/>
    </location>
    <ligand>
        <name>Zn(2+)</name>
        <dbReference type="ChEBI" id="CHEBI:29105"/>
    </ligand>
</feature>
<feature type="non-terminal residue">
    <location>
        <position position="1"/>
    </location>
</feature>
<feature type="non-terminal residue">
    <location>
        <position position="225"/>
    </location>
</feature>
<keyword id="KW-0021">Allosteric enzyme</keyword>
<keyword id="KW-0963">Cytoplasm</keyword>
<keyword id="KW-0342">GTP-binding</keyword>
<keyword id="KW-0378">Hydrolase</keyword>
<keyword id="KW-0479">Metal-binding</keyword>
<keyword id="KW-0547">Nucleotide-binding</keyword>
<keyword id="KW-0539">Nucleus</keyword>
<keyword id="KW-0783">Tetrahydrobiopterin biosynthesis</keyword>
<keyword id="KW-0862">Zinc</keyword>
<protein>
    <recommendedName>
        <fullName>GTP cyclohydrolase 1</fullName>
        <ecNumber evidence="1">3.5.4.16</ecNumber>
    </recommendedName>
    <alternativeName>
        <fullName>GTP cyclohydrolase I</fullName>
        <shortName>GTP-CH-I</shortName>
    </alternativeName>
</protein>